<organism>
    <name type="scientific">Pyrobaculum islandicum (strain DSM 4184 / JCM 9189 / GEO3)</name>
    <dbReference type="NCBI Taxonomy" id="384616"/>
    <lineage>
        <taxon>Archaea</taxon>
        <taxon>Thermoproteota</taxon>
        <taxon>Thermoprotei</taxon>
        <taxon>Thermoproteales</taxon>
        <taxon>Thermoproteaceae</taxon>
        <taxon>Pyrobaculum</taxon>
    </lineage>
</organism>
<dbReference type="EC" id="2.5.1.6" evidence="1"/>
<dbReference type="EMBL" id="CP000504">
    <property type="protein sequence ID" value="ABL87869.1"/>
    <property type="molecule type" value="Genomic_DNA"/>
</dbReference>
<dbReference type="RefSeq" id="WP_011762445.1">
    <property type="nucleotide sequence ID" value="NC_008701.1"/>
</dbReference>
<dbReference type="SMR" id="A1RSD7"/>
<dbReference type="STRING" id="384616.Pisl_0691"/>
<dbReference type="GeneID" id="4617141"/>
<dbReference type="KEGG" id="pis:Pisl_0691"/>
<dbReference type="eggNOG" id="arCOG01678">
    <property type="taxonomic scope" value="Archaea"/>
</dbReference>
<dbReference type="HOGENOM" id="CLU_057642_0_0_2"/>
<dbReference type="OrthoDB" id="204488at2157"/>
<dbReference type="UniPathway" id="UPA00315">
    <property type="reaction ID" value="UER00080"/>
</dbReference>
<dbReference type="Proteomes" id="UP000002595">
    <property type="component" value="Chromosome"/>
</dbReference>
<dbReference type="GO" id="GO:0005524">
    <property type="term" value="F:ATP binding"/>
    <property type="evidence" value="ECO:0007669"/>
    <property type="project" value="UniProtKB-UniRule"/>
</dbReference>
<dbReference type="GO" id="GO:0000287">
    <property type="term" value="F:magnesium ion binding"/>
    <property type="evidence" value="ECO:0007669"/>
    <property type="project" value="UniProtKB-UniRule"/>
</dbReference>
<dbReference type="GO" id="GO:0004478">
    <property type="term" value="F:methionine adenosyltransferase activity"/>
    <property type="evidence" value="ECO:0007669"/>
    <property type="project" value="UniProtKB-UniRule"/>
</dbReference>
<dbReference type="GO" id="GO:0006730">
    <property type="term" value="P:one-carbon metabolic process"/>
    <property type="evidence" value="ECO:0007669"/>
    <property type="project" value="UniProtKB-KW"/>
</dbReference>
<dbReference type="GO" id="GO:0006556">
    <property type="term" value="P:S-adenosylmethionine biosynthetic process"/>
    <property type="evidence" value="ECO:0007669"/>
    <property type="project" value="UniProtKB-UniRule"/>
</dbReference>
<dbReference type="Gene3D" id="3.30.300.10">
    <property type="match status" value="1"/>
</dbReference>
<dbReference type="Gene3D" id="3.30.300.280">
    <property type="entry name" value="S-adenosylmethionine synthetase, C-terminal domain"/>
    <property type="match status" value="2"/>
</dbReference>
<dbReference type="HAMAP" id="MF_00136">
    <property type="entry name" value="S_AdoMet_synth2"/>
    <property type="match status" value="1"/>
</dbReference>
<dbReference type="InterPro" id="IPR027790">
    <property type="entry name" value="AdoMet_synthase_2_family"/>
</dbReference>
<dbReference type="InterPro" id="IPR042544">
    <property type="entry name" value="AdoMet_synthase_3"/>
</dbReference>
<dbReference type="InterPro" id="IPR002795">
    <property type="entry name" value="S-AdoMet_synthetase_arc"/>
</dbReference>
<dbReference type="NCBIfam" id="NF003365">
    <property type="entry name" value="PRK04439.1-4"/>
    <property type="match status" value="1"/>
</dbReference>
<dbReference type="NCBIfam" id="NF003366">
    <property type="entry name" value="PRK04439.1-5"/>
    <property type="match status" value="1"/>
</dbReference>
<dbReference type="PANTHER" id="PTHR36697">
    <property type="entry name" value="S-ADENOSYLMETHIONINE SYNTHASE"/>
    <property type="match status" value="1"/>
</dbReference>
<dbReference type="PANTHER" id="PTHR36697:SF1">
    <property type="entry name" value="S-ADENOSYLMETHIONINE SYNTHASE"/>
    <property type="match status" value="1"/>
</dbReference>
<dbReference type="Pfam" id="PF01941">
    <property type="entry name" value="AdoMet_Synthase"/>
    <property type="match status" value="1"/>
</dbReference>
<comment type="function">
    <text evidence="1">Catalyzes the formation of S-adenosylmethionine from methionine and ATP.</text>
</comment>
<comment type="catalytic activity">
    <reaction evidence="1">
        <text>L-methionine + ATP + H2O = S-adenosyl-L-methionine + phosphate + diphosphate</text>
        <dbReference type="Rhea" id="RHEA:21080"/>
        <dbReference type="ChEBI" id="CHEBI:15377"/>
        <dbReference type="ChEBI" id="CHEBI:30616"/>
        <dbReference type="ChEBI" id="CHEBI:33019"/>
        <dbReference type="ChEBI" id="CHEBI:43474"/>
        <dbReference type="ChEBI" id="CHEBI:57844"/>
        <dbReference type="ChEBI" id="CHEBI:59789"/>
        <dbReference type="EC" id="2.5.1.6"/>
    </reaction>
</comment>
<comment type="cofactor">
    <cofactor evidence="1">
        <name>Mg(2+)</name>
        <dbReference type="ChEBI" id="CHEBI:18420"/>
    </cofactor>
</comment>
<comment type="pathway">
    <text evidence="1">Amino-acid biosynthesis; S-adenosyl-L-methionine biosynthesis; S-adenosyl-L-methionine from L-methionine: step 1/1.</text>
</comment>
<comment type="similarity">
    <text evidence="1">Belongs to the AdoMet synthase 2 family.</text>
</comment>
<reference key="1">
    <citation type="submission" date="2006-12" db="EMBL/GenBank/DDBJ databases">
        <title>Complete sequence of Pyrobaculum islandicum DSM 4184.</title>
        <authorList>
            <person name="Copeland A."/>
            <person name="Lucas S."/>
            <person name="Lapidus A."/>
            <person name="Barry K."/>
            <person name="Detter J.C."/>
            <person name="Glavina del Rio T."/>
            <person name="Dalin E."/>
            <person name="Tice H."/>
            <person name="Pitluck S."/>
            <person name="Meincke L."/>
            <person name="Brettin T."/>
            <person name="Bruce D."/>
            <person name="Han C."/>
            <person name="Tapia R."/>
            <person name="Gilna P."/>
            <person name="Schmutz J."/>
            <person name="Larimer F."/>
            <person name="Land M."/>
            <person name="Hauser L."/>
            <person name="Kyrpides N."/>
            <person name="Mikhailova N."/>
            <person name="Cozen A.E."/>
            <person name="Fitz-Gibbon S.T."/>
            <person name="House C.H."/>
            <person name="Saltikov C."/>
            <person name="Lowe T."/>
            <person name="Richardson P."/>
        </authorList>
    </citation>
    <scope>NUCLEOTIDE SEQUENCE [LARGE SCALE GENOMIC DNA]</scope>
    <source>
        <strain>DSM 4184 / JCM 9189 / GEO3</strain>
    </source>
</reference>
<proteinExistence type="inferred from homology"/>
<name>METK_PYRIL</name>
<sequence>MIVIEKVDKTPVVKRLVEIVERKGQGHPDYIADGISEWVSRYLSRYYLEHFGIILHHNVDKTLVVGGQAAPRFGGGEVLQPIYILVSGRATYEVRTKDGVIKVPLGTLVMQAARDWIKQHFRFLDPDTHVVIDYKIGQGSADLVGIYDLGVKSVPLANDTSVGVGYAPLTPLEQLVYKTERLLNSRDFKAKYPEVGEDVKVMGVRVGKEVKLTVAAAMISKLVKDKSHYLSVKEDVKKAVEDLASKVAPEYNIEVVVNAADKPEHGIFYLTVTGTSAEHGDDGMTGRGNRANGLITPMRSMSLEAAAGKNPVSHVGKIYNVVAQRIADKVYNQVKDIIEVYVEIVSQIGKPINEPKILNVEIIKSGELTGEVRNEVEAIAREEIEKITQITDYILRGEVSLY</sequence>
<protein>
    <recommendedName>
        <fullName evidence="1">S-adenosylmethionine synthase</fullName>
        <shortName evidence="1">AdoMet synthase</shortName>
        <ecNumber evidence="1">2.5.1.6</ecNumber>
    </recommendedName>
    <alternativeName>
        <fullName evidence="1">Methionine adenosyltransferase</fullName>
    </alternativeName>
</protein>
<evidence type="ECO:0000255" key="1">
    <source>
        <dbReference type="HAMAP-Rule" id="MF_00136"/>
    </source>
</evidence>
<feature type="chain" id="PRO_1000018658" description="S-adenosylmethionine synthase">
    <location>
        <begin position="1"/>
        <end position="402"/>
    </location>
</feature>
<feature type="binding site" evidence="1">
    <location>
        <begin position="137"/>
        <end position="142"/>
    </location>
    <ligand>
        <name>ATP</name>
        <dbReference type="ChEBI" id="CHEBI:30616"/>
    </ligand>
</feature>
<keyword id="KW-0067">ATP-binding</keyword>
<keyword id="KW-0460">Magnesium</keyword>
<keyword id="KW-0547">Nucleotide-binding</keyword>
<keyword id="KW-0554">One-carbon metabolism</keyword>
<keyword id="KW-0808">Transferase</keyword>
<accession>A1RSD7</accession>
<gene>
    <name evidence="1" type="primary">mat</name>
    <name type="ordered locus">Pisl_0691</name>
</gene>